<accession>P0A6A5</accession>
<accession>P15046</accession>
<accession>P78188</accession>
<accession>Q59386</accession>
<organism>
    <name type="scientific">Escherichia coli O157:H7</name>
    <dbReference type="NCBI Taxonomy" id="83334"/>
    <lineage>
        <taxon>Bacteria</taxon>
        <taxon>Pseudomonadati</taxon>
        <taxon>Pseudomonadota</taxon>
        <taxon>Gammaproteobacteria</taxon>
        <taxon>Enterobacterales</taxon>
        <taxon>Enterobacteriaceae</taxon>
        <taxon>Escherichia</taxon>
    </lineage>
</organism>
<proteinExistence type="inferred from homology"/>
<name>ACKA_ECO57</name>
<comment type="function">
    <text evidence="1">Catalyzes the formation of acetyl phosphate from acetate and ATP. Can also catalyze the reverse reaction.</text>
</comment>
<comment type="catalytic activity">
    <reaction evidence="1">
        <text>acetate + ATP = acetyl phosphate + ADP</text>
        <dbReference type="Rhea" id="RHEA:11352"/>
        <dbReference type="ChEBI" id="CHEBI:22191"/>
        <dbReference type="ChEBI" id="CHEBI:30089"/>
        <dbReference type="ChEBI" id="CHEBI:30616"/>
        <dbReference type="ChEBI" id="CHEBI:456216"/>
        <dbReference type="EC" id="2.7.2.1"/>
    </reaction>
</comment>
<comment type="cofactor">
    <cofactor evidence="1">
        <name>Mg(2+)</name>
        <dbReference type="ChEBI" id="CHEBI:18420"/>
    </cofactor>
    <cofactor evidence="1">
        <name>Mn(2+)</name>
        <dbReference type="ChEBI" id="CHEBI:29035"/>
    </cofactor>
    <text evidence="1">Mg(2+). Can also accept Mn(2+).</text>
</comment>
<comment type="pathway">
    <text evidence="1">Metabolic intermediate biosynthesis; acetyl-CoA biosynthesis; acetyl-CoA from acetate: step 1/2.</text>
</comment>
<comment type="subunit">
    <text evidence="1">Homodimer.</text>
</comment>
<comment type="subcellular location">
    <subcellularLocation>
        <location evidence="1">Cytoplasm</location>
    </subcellularLocation>
</comment>
<comment type="similarity">
    <text evidence="1">Belongs to the acetokinase family.</text>
</comment>
<dbReference type="EC" id="2.7.2.1" evidence="1"/>
<dbReference type="EMBL" id="AE005174">
    <property type="protein sequence ID" value="AAG57425.1"/>
    <property type="molecule type" value="Genomic_DNA"/>
</dbReference>
<dbReference type="EMBL" id="BA000007">
    <property type="protein sequence ID" value="BAB36603.1"/>
    <property type="molecule type" value="Genomic_DNA"/>
</dbReference>
<dbReference type="PIR" id="D91026">
    <property type="entry name" value="D91026"/>
</dbReference>
<dbReference type="RefSeq" id="NP_311207.1">
    <property type="nucleotide sequence ID" value="NC_002695.1"/>
</dbReference>
<dbReference type="RefSeq" id="WP_000095707.1">
    <property type="nucleotide sequence ID" value="NZ_VOAI01000001.1"/>
</dbReference>
<dbReference type="SMR" id="P0A6A5"/>
<dbReference type="STRING" id="155864.Z3558"/>
<dbReference type="GeneID" id="916888"/>
<dbReference type="GeneID" id="93774878"/>
<dbReference type="KEGG" id="ece:Z3558"/>
<dbReference type="KEGG" id="ecs:ECs_3180"/>
<dbReference type="PATRIC" id="fig|386585.9.peg.3320"/>
<dbReference type="eggNOG" id="COG0282">
    <property type="taxonomic scope" value="Bacteria"/>
</dbReference>
<dbReference type="HOGENOM" id="CLU_020352_0_0_6"/>
<dbReference type="OMA" id="HKYVSQR"/>
<dbReference type="BRENDA" id="2.7.2.1">
    <property type="organism ID" value="2026"/>
</dbReference>
<dbReference type="UniPathway" id="UPA00340">
    <property type="reaction ID" value="UER00458"/>
</dbReference>
<dbReference type="Proteomes" id="UP000000558">
    <property type="component" value="Chromosome"/>
</dbReference>
<dbReference type="Proteomes" id="UP000002519">
    <property type="component" value="Chromosome"/>
</dbReference>
<dbReference type="GO" id="GO:0005829">
    <property type="term" value="C:cytosol"/>
    <property type="evidence" value="ECO:0007669"/>
    <property type="project" value="TreeGrafter"/>
</dbReference>
<dbReference type="GO" id="GO:0008776">
    <property type="term" value="F:acetate kinase activity"/>
    <property type="evidence" value="ECO:0007669"/>
    <property type="project" value="UniProtKB-UniRule"/>
</dbReference>
<dbReference type="GO" id="GO:0005524">
    <property type="term" value="F:ATP binding"/>
    <property type="evidence" value="ECO:0007669"/>
    <property type="project" value="UniProtKB-KW"/>
</dbReference>
<dbReference type="GO" id="GO:0000287">
    <property type="term" value="F:magnesium ion binding"/>
    <property type="evidence" value="ECO:0007669"/>
    <property type="project" value="UniProtKB-UniRule"/>
</dbReference>
<dbReference type="GO" id="GO:0006083">
    <property type="term" value="P:acetate metabolic process"/>
    <property type="evidence" value="ECO:0007669"/>
    <property type="project" value="TreeGrafter"/>
</dbReference>
<dbReference type="GO" id="GO:0006085">
    <property type="term" value="P:acetyl-CoA biosynthetic process"/>
    <property type="evidence" value="ECO:0007669"/>
    <property type="project" value="UniProtKB-UniRule"/>
</dbReference>
<dbReference type="CDD" id="cd24010">
    <property type="entry name" value="ASKHA_NBD_AcK_PK"/>
    <property type="match status" value="1"/>
</dbReference>
<dbReference type="FunFam" id="3.30.420.40:FF:000041">
    <property type="entry name" value="Acetate kinase"/>
    <property type="match status" value="1"/>
</dbReference>
<dbReference type="FunFam" id="3.30.420.40:FF:000042">
    <property type="entry name" value="Acetate kinase"/>
    <property type="match status" value="1"/>
</dbReference>
<dbReference type="Gene3D" id="3.30.420.40">
    <property type="match status" value="2"/>
</dbReference>
<dbReference type="HAMAP" id="MF_00020">
    <property type="entry name" value="Acetate_kinase"/>
    <property type="match status" value="1"/>
</dbReference>
<dbReference type="InterPro" id="IPR004372">
    <property type="entry name" value="Ac/propionate_kinase"/>
</dbReference>
<dbReference type="InterPro" id="IPR000890">
    <property type="entry name" value="Aliphatic_acid_kin_short-chain"/>
</dbReference>
<dbReference type="InterPro" id="IPR023865">
    <property type="entry name" value="Aliphatic_acid_kinase_CS"/>
</dbReference>
<dbReference type="InterPro" id="IPR043129">
    <property type="entry name" value="ATPase_NBD"/>
</dbReference>
<dbReference type="NCBIfam" id="TIGR00016">
    <property type="entry name" value="ackA"/>
    <property type="match status" value="1"/>
</dbReference>
<dbReference type="PANTHER" id="PTHR21060">
    <property type="entry name" value="ACETATE KINASE"/>
    <property type="match status" value="1"/>
</dbReference>
<dbReference type="PANTHER" id="PTHR21060:SF21">
    <property type="entry name" value="ACETATE KINASE"/>
    <property type="match status" value="1"/>
</dbReference>
<dbReference type="Pfam" id="PF00871">
    <property type="entry name" value="Acetate_kinase"/>
    <property type="match status" value="1"/>
</dbReference>
<dbReference type="PIRSF" id="PIRSF000722">
    <property type="entry name" value="Acetate_prop_kin"/>
    <property type="match status" value="1"/>
</dbReference>
<dbReference type="PRINTS" id="PR00471">
    <property type="entry name" value="ACETATEKNASE"/>
</dbReference>
<dbReference type="SUPFAM" id="SSF53067">
    <property type="entry name" value="Actin-like ATPase domain"/>
    <property type="match status" value="2"/>
</dbReference>
<dbReference type="PROSITE" id="PS01075">
    <property type="entry name" value="ACETATE_KINASE_1"/>
    <property type="match status" value="1"/>
</dbReference>
<dbReference type="PROSITE" id="PS01076">
    <property type="entry name" value="ACETATE_KINASE_2"/>
    <property type="match status" value="1"/>
</dbReference>
<reference key="1">
    <citation type="journal article" date="2001" name="Nature">
        <title>Genome sequence of enterohaemorrhagic Escherichia coli O157:H7.</title>
        <authorList>
            <person name="Perna N.T."/>
            <person name="Plunkett G. III"/>
            <person name="Burland V."/>
            <person name="Mau B."/>
            <person name="Glasner J.D."/>
            <person name="Rose D.J."/>
            <person name="Mayhew G.F."/>
            <person name="Evans P.S."/>
            <person name="Gregor J."/>
            <person name="Kirkpatrick H.A."/>
            <person name="Posfai G."/>
            <person name="Hackett J."/>
            <person name="Klink S."/>
            <person name="Boutin A."/>
            <person name="Shao Y."/>
            <person name="Miller L."/>
            <person name="Grotbeck E.J."/>
            <person name="Davis N.W."/>
            <person name="Lim A."/>
            <person name="Dimalanta E.T."/>
            <person name="Potamousis K."/>
            <person name="Apodaca J."/>
            <person name="Anantharaman T.S."/>
            <person name="Lin J."/>
            <person name="Yen G."/>
            <person name="Schwartz D.C."/>
            <person name="Welch R.A."/>
            <person name="Blattner F.R."/>
        </authorList>
    </citation>
    <scope>NUCLEOTIDE SEQUENCE [LARGE SCALE GENOMIC DNA]</scope>
    <source>
        <strain>O157:H7 / EDL933 / ATCC 700927 / EHEC</strain>
    </source>
</reference>
<reference key="2">
    <citation type="journal article" date="2001" name="DNA Res.">
        <title>Complete genome sequence of enterohemorrhagic Escherichia coli O157:H7 and genomic comparison with a laboratory strain K-12.</title>
        <authorList>
            <person name="Hayashi T."/>
            <person name="Makino K."/>
            <person name="Ohnishi M."/>
            <person name="Kurokawa K."/>
            <person name="Ishii K."/>
            <person name="Yokoyama K."/>
            <person name="Han C.-G."/>
            <person name="Ohtsubo E."/>
            <person name="Nakayama K."/>
            <person name="Murata T."/>
            <person name="Tanaka M."/>
            <person name="Tobe T."/>
            <person name="Iida T."/>
            <person name="Takami H."/>
            <person name="Honda T."/>
            <person name="Sasakawa C."/>
            <person name="Ogasawara N."/>
            <person name="Yasunaga T."/>
            <person name="Kuhara S."/>
            <person name="Shiba T."/>
            <person name="Hattori M."/>
            <person name="Shinagawa H."/>
        </authorList>
    </citation>
    <scope>NUCLEOTIDE SEQUENCE [LARGE SCALE GENOMIC DNA]</scope>
    <source>
        <strain>O157:H7 / Sakai / RIMD 0509952 / EHEC</strain>
    </source>
</reference>
<feature type="chain" id="PRO_0000107558" description="Acetate kinase">
    <location>
        <begin position="1"/>
        <end position="400"/>
    </location>
</feature>
<feature type="active site" description="Proton donor/acceptor" evidence="1">
    <location>
        <position position="150"/>
    </location>
</feature>
<feature type="binding site" evidence="1">
    <location>
        <position position="10"/>
    </location>
    <ligand>
        <name>Mg(2+)</name>
        <dbReference type="ChEBI" id="CHEBI:18420"/>
    </ligand>
</feature>
<feature type="binding site" evidence="1">
    <location>
        <position position="17"/>
    </location>
    <ligand>
        <name>ATP</name>
        <dbReference type="ChEBI" id="CHEBI:30616"/>
    </ligand>
</feature>
<feature type="binding site" evidence="1">
    <location>
        <position position="91"/>
    </location>
    <ligand>
        <name>substrate</name>
    </ligand>
</feature>
<feature type="binding site" evidence="1">
    <location>
        <begin position="210"/>
        <end position="214"/>
    </location>
    <ligand>
        <name>ATP</name>
        <dbReference type="ChEBI" id="CHEBI:30616"/>
    </ligand>
</feature>
<feature type="binding site" evidence="1">
    <location>
        <begin position="285"/>
        <end position="287"/>
    </location>
    <ligand>
        <name>ATP</name>
        <dbReference type="ChEBI" id="CHEBI:30616"/>
    </ligand>
</feature>
<feature type="binding site" evidence="1">
    <location>
        <begin position="333"/>
        <end position="337"/>
    </location>
    <ligand>
        <name>ATP</name>
        <dbReference type="ChEBI" id="CHEBI:30616"/>
    </ligand>
</feature>
<feature type="binding site" evidence="1">
    <location>
        <position position="387"/>
    </location>
    <ligand>
        <name>Mg(2+)</name>
        <dbReference type="ChEBI" id="CHEBI:18420"/>
    </ligand>
</feature>
<feature type="site" description="Transition state stabilizer" evidence="1">
    <location>
        <position position="182"/>
    </location>
</feature>
<feature type="site" description="Transition state stabilizer" evidence="1">
    <location>
        <position position="243"/>
    </location>
</feature>
<keyword id="KW-0067">ATP-binding</keyword>
<keyword id="KW-0963">Cytoplasm</keyword>
<keyword id="KW-0418">Kinase</keyword>
<keyword id="KW-0460">Magnesium</keyword>
<keyword id="KW-0479">Metal-binding</keyword>
<keyword id="KW-0547">Nucleotide-binding</keyword>
<keyword id="KW-1185">Reference proteome</keyword>
<keyword id="KW-0808">Transferase</keyword>
<protein>
    <recommendedName>
        <fullName evidence="1">Acetate kinase</fullName>
        <ecNumber evidence="1">2.7.2.1</ecNumber>
    </recommendedName>
    <alternativeName>
        <fullName evidence="1">Acetokinase</fullName>
    </alternativeName>
</protein>
<gene>
    <name evidence="1" type="primary">ackA</name>
    <name type="synonym">ack</name>
    <name type="ordered locus">Z3558</name>
    <name type="ordered locus">ECs3180</name>
</gene>
<sequence length="400" mass="43290">MSSKLVLVLNCGSSSLKFAIIDAVNGEEYLSGLAECFHLPEARIKWKMDGNKQEAALGAGAAHSEALNFIVNTILAQKPELSAQLTAIGHRIVHGGEKYTSSVVIDESVIQGIKDAASFAPLHNPAHLIGIEEALKSFPQLKDKNVAVFDTAFHQTMPEESYLYALPYNLYKEHGIRRYGAHGTSHFYVTQEAAKMLNKPVEELNIITCHLGNGGSVSAIRNGKCVDTSMGLTPLEGLVMGTRSGDIDPAIIFHLHDTLGMSVDAINKLLTKESGLLGLTEVTSDCRYVEDNYATKEDAKRAMDVYCHRLAKYIGAYTALMDGRLDAVVFTGGIGENAAMVRELSLGKLGVLGFEVDHERNLAARFGKSGFINKEGTRPAVVIPTNEELVIAQDASRLTA</sequence>
<evidence type="ECO:0000255" key="1">
    <source>
        <dbReference type="HAMAP-Rule" id="MF_00020"/>
    </source>
</evidence>